<reference key="1">
    <citation type="submission" date="2009-01" db="EMBL/GenBank/DDBJ databases">
        <title>Complete sequence of chromosome of Arthrobacter chlorophenolicus A6.</title>
        <authorList>
            <consortium name="US DOE Joint Genome Institute"/>
            <person name="Lucas S."/>
            <person name="Copeland A."/>
            <person name="Lapidus A."/>
            <person name="Glavina del Rio T."/>
            <person name="Tice H."/>
            <person name="Bruce D."/>
            <person name="Goodwin L."/>
            <person name="Pitluck S."/>
            <person name="Goltsman E."/>
            <person name="Clum A."/>
            <person name="Larimer F."/>
            <person name="Land M."/>
            <person name="Hauser L."/>
            <person name="Kyrpides N."/>
            <person name="Mikhailova N."/>
            <person name="Jansson J."/>
            <person name="Richardson P."/>
        </authorList>
    </citation>
    <scope>NUCLEOTIDE SEQUENCE [LARGE SCALE GENOMIC DNA]</scope>
    <source>
        <strain>ATCC 700700 / DSM 12829 / CIP 107037 / JCM 12360 / KCTC 9906 / NCIMB 13794 / A6</strain>
    </source>
</reference>
<gene>
    <name evidence="1" type="primary">ureA</name>
    <name type="ordered locus">Achl_0390</name>
</gene>
<sequence length="100" mass="11291">MHLMPREQEKLMIVVAADLARRRQSRGLKLNYPEAVAIISYELIEGARDGRTVADLMSYGTTILTREDVMEGVPEMIHDVQIEATFPDGTKLVTVHDPIR</sequence>
<accession>B8HA05</accession>
<keyword id="KW-0963">Cytoplasm</keyword>
<keyword id="KW-0378">Hydrolase</keyword>
<dbReference type="EC" id="3.5.1.5" evidence="1"/>
<dbReference type="EMBL" id="CP001341">
    <property type="protein sequence ID" value="ACL38389.1"/>
    <property type="molecule type" value="Genomic_DNA"/>
</dbReference>
<dbReference type="RefSeq" id="WP_015935616.1">
    <property type="nucleotide sequence ID" value="NC_011886.1"/>
</dbReference>
<dbReference type="SMR" id="B8HA05"/>
<dbReference type="STRING" id="452863.Achl_0390"/>
<dbReference type="KEGG" id="ach:Achl_0390"/>
<dbReference type="eggNOG" id="COG0831">
    <property type="taxonomic scope" value="Bacteria"/>
</dbReference>
<dbReference type="HOGENOM" id="CLU_145825_1_0_11"/>
<dbReference type="OrthoDB" id="9797217at2"/>
<dbReference type="UniPathway" id="UPA00258">
    <property type="reaction ID" value="UER00370"/>
</dbReference>
<dbReference type="Proteomes" id="UP000002505">
    <property type="component" value="Chromosome"/>
</dbReference>
<dbReference type="GO" id="GO:0005737">
    <property type="term" value="C:cytoplasm"/>
    <property type="evidence" value="ECO:0007669"/>
    <property type="project" value="UniProtKB-SubCell"/>
</dbReference>
<dbReference type="GO" id="GO:0016151">
    <property type="term" value="F:nickel cation binding"/>
    <property type="evidence" value="ECO:0007669"/>
    <property type="project" value="InterPro"/>
</dbReference>
<dbReference type="GO" id="GO:0009039">
    <property type="term" value="F:urease activity"/>
    <property type="evidence" value="ECO:0007669"/>
    <property type="project" value="UniProtKB-UniRule"/>
</dbReference>
<dbReference type="GO" id="GO:0043419">
    <property type="term" value="P:urea catabolic process"/>
    <property type="evidence" value="ECO:0007669"/>
    <property type="project" value="UniProtKB-UniRule"/>
</dbReference>
<dbReference type="CDD" id="cd00390">
    <property type="entry name" value="Urease_gamma"/>
    <property type="match status" value="1"/>
</dbReference>
<dbReference type="Gene3D" id="3.30.280.10">
    <property type="entry name" value="Urease, gamma-like subunit"/>
    <property type="match status" value="1"/>
</dbReference>
<dbReference type="HAMAP" id="MF_00739">
    <property type="entry name" value="Urease_gamma"/>
    <property type="match status" value="1"/>
</dbReference>
<dbReference type="InterPro" id="IPR012010">
    <property type="entry name" value="Urease_gamma"/>
</dbReference>
<dbReference type="InterPro" id="IPR002026">
    <property type="entry name" value="Urease_gamma/gamma-beta_su"/>
</dbReference>
<dbReference type="InterPro" id="IPR036463">
    <property type="entry name" value="Urease_gamma_sf"/>
</dbReference>
<dbReference type="InterPro" id="IPR050069">
    <property type="entry name" value="Urease_subunit"/>
</dbReference>
<dbReference type="NCBIfam" id="NF009712">
    <property type="entry name" value="PRK13241.1"/>
    <property type="match status" value="1"/>
</dbReference>
<dbReference type="NCBIfam" id="TIGR00193">
    <property type="entry name" value="urease_gam"/>
    <property type="match status" value="1"/>
</dbReference>
<dbReference type="PANTHER" id="PTHR33569">
    <property type="entry name" value="UREASE"/>
    <property type="match status" value="1"/>
</dbReference>
<dbReference type="PANTHER" id="PTHR33569:SF1">
    <property type="entry name" value="UREASE"/>
    <property type="match status" value="1"/>
</dbReference>
<dbReference type="Pfam" id="PF00547">
    <property type="entry name" value="Urease_gamma"/>
    <property type="match status" value="1"/>
</dbReference>
<dbReference type="PIRSF" id="PIRSF001223">
    <property type="entry name" value="Urease_gamma"/>
    <property type="match status" value="1"/>
</dbReference>
<dbReference type="SUPFAM" id="SSF54111">
    <property type="entry name" value="Urease, gamma-subunit"/>
    <property type="match status" value="1"/>
</dbReference>
<comment type="catalytic activity">
    <reaction evidence="1">
        <text>urea + 2 H2O + H(+) = hydrogencarbonate + 2 NH4(+)</text>
        <dbReference type="Rhea" id="RHEA:20557"/>
        <dbReference type="ChEBI" id="CHEBI:15377"/>
        <dbReference type="ChEBI" id="CHEBI:15378"/>
        <dbReference type="ChEBI" id="CHEBI:16199"/>
        <dbReference type="ChEBI" id="CHEBI:17544"/>
        <dbReference type="ChEBI" id="CHEBI:28938"/>
        <dbReference type="EC" id="3.5.1.5"/>
    </reaction>
</comment>
<comment type="pathway">
    <text evidence="1">Nitrogen metabolism; urea degradation; CO(2) and NH(3) from urea (urease route): step 1/1.</text>
</comment>
<comment type="subunit">
    <text evidence="1">Heterotrimer of UreA (gamma), UreB (beta) and UreC (alpha) subunits. Three heterotrimers associate to form the active enzyme.</text>
</comment>
<comment type="subcellular location">
    <subcellularLocation>
        <location evidence="1">Cytoplasm</location>
    </subcellularLocation>
</comment>
<comment type="similarity">
    <text evidence="1">Belongs to the urease gamma subunit family.</text>
</comment>
<name>URE3_PSECP</name>
<organism>
    <name type="scientific">Pseudarthrobacter chlorophenolicus (strain ATCC 700700 / DSM 12829 / CIP 107037 / JCM 12360 / KCTC 9906 / NCIMB 13794 / A6)</name>
    <name type="common">Arthrobacter chlorophenolicus</name>
    <dbReference type="NCBI Taxonomy" id="452863"/>
    <lineage>
        <taxon>Bacteria</taxon>
        <taxon>Bacillati</taxon>
        <taxon>Actinomycetota</taxon>
        <taxon>Actinomycetes</taxon>
        <taxon>Micrococcales</taxon>
        <taxon>Micrococcaceae</taxon>
        <taxon>Pseudarthrobacter</taxon>
    </lineage>
</organism>
<evidence type="ECO:0000255" key="1">
    <source>
        <dbReference type="HAMAP-Rule" id="MF_00739"/>
    </source>
</evidence>
<proteinExistence type="inferred from homology"/>
<protein>
    <recommendedName>
        <fullName evidence="1">Urease subunit gamma</fullName>
        <ecNumber evidence="1">3.5.1.5</ecNumber>
    </recommendedName>
    <alternativeName>
        <fullName evidence="1">Urea amidohydrolase subunit gamma</fullName>
    </alternativeName>
</protein>
<feature type="chain" id="PRO_1000199851" description="Urease subunit gamma">
    <location>
        <begin position="1"/>
        <end position="100"/>
    </location>
</feature>